<protein>
    <recommendedName>
        <fullName evidence="1">Small ribosomal subunit protein uS2c</fullName>
    </recommendedName>
    <alternativeName>
        <fullName>30S ribosomal protein S2, chloroplastic</fullName>
    </alternativeName>
</protein>
<gene>
    <name type="primary">rps2</name>
</gene>
<organism>
    <name type="scientific">Stigeoclonium helveticum</name>
    <name type="common">Green alga</name>
    <dbReference type="NCBI Taxonomy" id="55999"/>
    <lineage>
        <taxon>Eukaryota</taxon>
        <taxon>Viridiplantae</taxon>
        <taxon>Chlorophyta</taxon>
        <taxon>core chlorophytes</taxon>
        <taxon>Chlorophyceae</taxon>
        <taxon>OCC clade</taxon>
        <taxon>Chaetophorales</taxon>
        <taxon>Chaetophoraceae</taxon>
        <taxon>Stigeoclonium</taxon>
    </lineage>
</organism>
<geneLocation type="chloroplast"/>
<keyword id="KW-0150">Chloroplast</keyword>
<keyword id="KW-0934">Plastid</keyword>
<keyword id="KW-0687">Ribonucleoprotein</keyword>
<keyword id="KW-0689">Ribosomal protein</keyword>
<reference key="1">
    <citation type="journal article" date="2006" name="Mol. Genet. Genomics">
        <title>Distinctive architecture of the chloroplast genome in the chlorophycean green alga Stigeoclonium helveticum.</title>
        <authorList>
            <person name="Belanger A.-S."/>
            <person name="Brouard J.-S."/>
            <person name="Charlebois P."/>
            <person name="Otis C."/>
            <person name="Lemieux C."/>
            <person name="Turmel M."/>
        </authorList>
    </citation>
    <scope>NUCLEOTIDE SEQUENCE [LARGE SCALE GENOMIC DNA]</scope>
    <source>
        <strain>UTEX 441</strain>
    </source>
</reference>
<feature type="chain" id="PRO_0000352161" description="Small ribosomal subunit protein uS2c">
    <location>
        <begin position="1"/>
        <end position="314"/>
    </location>
</feature>
<evidence type="ECO:0000305" key="1"/>
<sequence>MTLSTNNSKNDFLDKTGPVSILGTSKGKKALLRRRLLIIQNVRNILIKKIINFDNFSNPIETYKIMLRKSLHFGHPVIQCDSGMKKYIRGQSNGKHFINLFRTKRYIRKALWYLTKYAYKRKNILFVGTAIPSARYVATTALKTKSFFVNFRWLGGMLNNWKTLRKLLQKLKTLQKEQKNKIWKNLPKKEGIARLKEKQRLEKYLKGIQMIKGFPEVVIMTSQTKDLSAARECKKMGIWNLSILDTNCDPRLADLMVPANDDSASSVKFLLFNFAKAIQAGRALSVLKKKLKNKLTKKKQTKSRAKVFLKEKKL</sequence>
<dbReference type="EMBL" id="DQ630521">
    <property type="protein sequence ID" value="ABF60196.1"/>
    <property type="molecule type" value="Genomic_DNA"/>
</dbReference>
<dbReference type="RefSeq" id="YP_764388.1">
    <property type="nucleotide sequence ID" value="NC_008372.1"/>
</dbReference>
<dbReference type="SMR" id="Q06SH8"/>
<dbReference type="GeneID" id="4308376"/>
<dbReference type="GO" id="GO:0009507">
    <property type="term" value="C:chloroplast"/>
    <property type="evidence" value="ECO:0007669"/>
    <property type="project" value="UniProtKB-SubCell"/>
</dbReference>
<dbReference type="GO" id="GO:0005763">
    <property type="term" value="C:mitochondrial small ribosomal subunit"/>
    <property type="evidence" value="ECO:0007669"/>
    <property type="project" value="TreeGrafter"/>
</dbReference>
<dbReference type="GO" id="GO:0003735">
    <property type="term" value="F:structural constituent of ribosome"/>
    <property type="evidence" value="ECO:0007669"/>
    <property type="project" value="InterPro"/>
</dbReference>
<dbReference type="GO" id="GO:0006412">
    <property type="term" value="P:translation"/>
    <property type="evidence" value="ECO:0007669"/>
    <property type="project" value="UniProtKB-UniRule"/>
</dbReference>
<dbReference type="CDD" id="cd01425">
    <property type="entry name" value="RPS2"/>
    <property type="match status" value="1"/>
</dbReference>
<dbReference type="Gene3D" id="3.40.50.10490">
    <property type="entry name" value="Glucose-6-phosphate isomerase like protein, domain 1"/>
    <property type="match status" value="1"/>
</dbReference>
<dbReference type="Gene3D" id="1.10.287.610">
    <property type="entry name" value="Helix hairpin bin"/>
    <property type="match status" value="1"/>
</dbReference>
<dbReference type="HAMAP" id="MF_00291_B">
    <property type="entry name" value="Ribosomal_uS2_B"/>
    <property type="match status" value="1"/>
</dbReference>
<dbReference type="InterPro" id="IPR001865">
    <property type="entry name" value="Ribosomal_uS2"/>
</dbReference>
<dbReference type="InterPro" id="IPR005706">
    <property type="entry name" value="Ribosomal_uS2_bac/mit/plastid"/>
</dbReference>
<dbReference type="InterPro" id="IPR023591">
    <property type="entry name" value="Ribosomal_uS2_flav_dom_sf"/>
</dbReference>
<dbReference type="NCBIfam" id="TIGR01011">
    <property type="entry name" value="rpsB_bact"/>
    <property type="match status" value="1"/>
</dbReference>
<dbReference type="PANTHER" id="PTHR12534">
    <property type="entry name" value="30S RIBOSOMAL PROTEIN S2 PROKARYOTIC AND ORGANELLAR"/>
    <property type="match status" value="1"/>
</dbReference>
<dbReference type="PANTHER" id="PTHR12534:SF0">
    <property type="entry name" value="SMALL RIBOSOMAL SUBUNIT PROTEIN US2M"/>
    <property type="match status" value="1"/>
</dbReference>
<dbReference type="Pfam" id="PF00318">
    <property type="entry name" value="Ribosomal_S2"/>
    <property type="match status" value="1"/>
</dbReference>
<dbReference type="PRINTS" id="PR00395">
    <property type="entry name" value="RIBOSOMALS2"/>
</dbReference>
<dbReference type="SUPFAM" id="SSF52313">
    <property type="entry name" value="Ribosomal protein S2"/>
    <property type="match status" value="1"/>
</dbReference>
<accession>Q06SH8</accession>
<proteinExistence type="inferred from homology"/>
<name>RR2_STIHE</name>
<comment type="subcellular location">
    <subcellularLocation>
        <location>Plastid</location>
        <location>Chloroplast</location>
    </subcellularLocation>
</comment>
<comment type="similarity">
    <text evidence="1">Belongs to the universal ribosomal protein uS2 family.</text>
</comment>